<keyword id="KW-0067">ATP-binding</keyword>
<keyword id="KW-0963">Cytoplasm</keyword>
<keyword id="KW-0347">Helicase</keyword>
<keyword id="KW-0378">Hydrolase</keyword>
<keyword id="KW-0507">mRNA processing</keyword>
<keyword id="KW-0508">mRNA splicing</keyword>
<keyword id="KW-0547">Nucleotide-binding</keyword>
<keyword id="KW-0539">Nucleus</keyword>
<keyword id="KW-1185">Reference proteome</keyword>
<name>PRP28_ASPTN</name>
<evidence type="ECO:0000250" key="1"/>
<evidence type="ECO:0000255" key="2">
    <source>
        <dbReference type="PROSITE-ProRule" id="PRU00541"/>
    </source>
</evidence>
<evidence type="ECO:0000255" key="3">
    <source>
        <dbReference type="PROSITE-ProRule" id="PRU00542"/>
    </source>
</evidence>
<evidence type="ECO:0000256" key="4">
    <source>
        <dbReference type="SAM" id="MobiDB-lite"/>
    </source>
</evidence>
<evidence type="ECO:0000305" key="5"/>
<protein>
    <recommendedName>
        <fullName>Pre-mRNA-splicing ATP-dependent RNA helicase prp28</fullName>
        <ecNumber>3.6.4.13</ecNumber>
    </recommendedName>
</protein>
<sequence>MPGPPATAPPPEPIERPPTPPPPPPEDSAAPPPPPDMSAPPPPPQDELPPAPEPKKKKLGWGSKRPAAAPLSVEELVRKKREADAAAAKPKFLSKKEREKIALEKRAKEVEQSRRKTSTNGASDTASVRSESATPNGVDRTASIPTGPRAMRTSEAPPPPRPRHDSSSNGNGNSNSNSNSNGTVDEDEAAAQAALVKQRYMGAEMTSSFSAKKKRKRTTDRKFNFEWNAEEDTSRDYNPLYAQRHEANFFGRGRLAGFGDDVADGVARKYAAALEDRDREAGSVRAREILEMERRRREESTRNQLDKHWSEKKLEHMRERDWRIFKEDFNIATKGGSVPNPMRSWAESGLPSRLLDLVHRVGYKDPTPIQRAAIPIAMQSRDLIGVAVTGSGKTAAFLLPLLVYIAELPRIDEFEWRKNDGPYAIVLAPTRELAQQIEIEAKKFTIPLGFTVVSIVGGHSLEEQAYSLRNGAEIIIATPGRLVDCIERRLLVLSQCCYVIMDEADRMIDLGFEEPVNKILDALPVSNEKPDSDAAENAAAMSQLHHAGGGRDTRYRQTMMYTATMPTAVERIARKYLRRPAIVTIGSAGEAVDTVEQRVELIAGEDKRKKRLGDILSSGEFRPPIIVFVNIKRNCDAIAREIKQWGFSSVTLHGSKTQEQREAALASVRNGSTDVLVATDLAGRGIDVPDVSLVVNFNMATSIESYTHRIGRTGRAGKSGVAITFLGNEDADVMYDLKQMLIKSPISRVPDELRKHEAAQQKPTRGFSKKNDESSAFGGKGGW</sequence>
<dbReference type="EC" id="3.6.4.13"/>
<dbReference type="EMBL" id="CH476600">
    <property type="protein sequence ID" value="EAU34383.1"/>
    <property type="molecule type" value="Genomic_DNA"/>
</dbReference>
<dbReference type="RefSeq" id="XP_001214492.1">
    <property type="nucleotide sequence ID" value="XM_001214492.1"/>
</dbReference>
<dbReference type="SMR" id="Q0CLX0"/>
<dbReference type="STRING" id="341663.Q0CLX0"/>
<dbReference type="EnsemblFungi" id="EAU34383">
    <property type="protein sequence ID" value="EAU34383"/>
    <property type="gene ID" value="ATEG_05314"/>
</dbReference>
<dbReference type="GeneID" id="4321214"/>
<dbReference type="VEuPathDB" id="FungiDB:ATEG_05314"/>
<dbReference type="eggNOG" id="KOG0333">
    <property type="taxonomic scope" value="Eukaryota"/>
</dbReference>
<dbReference type="HOGENOM" id="CLU_003041_11_3_1"/>
<dbReference type="OMA" id="ARDIKHM"/>
<dbReference type="OrthoDB" id="196131at2759"/>
<dbReference type="Proteomes" id="UP000007963">
    <property type="component" value="Unassembled WGS sequence"/>
</dbReference>
<dbReference type="GO" id="GO:0005737">
    <property type="term" value="C:cytoplasm"/>
    <property type="evidence" value="ECO:0007669"/>
    <property type="project" value="UniProtKB-SubCell"/>
</dbReference>
<dbReference type="GO" id="GO:0005634">
    <property type="term" value="C:nucleus"/>
    <property type="evidence" value="ECO:0007669"/>
    <property type="project" value="UniProtKB-SubCell"/>
</dbReference>
<dbReference type="GO" id="GO:0005524">
    <property type="term" value="F:ATP binding"/>
    <property type="evidence" value="ECO:0007669"/>
    <property type="project" value="UniProtKB-KW"/>
</dbReference>
<dbReference type="GO" id="GO:0016887">
    <property type="term" value="F:ATP hydrolysis activity"/>
    <property type="evidence" value="ECO:0007669"/>
    <property type="project" value="RHEA"/>
</dbReference>
<dbReference type="GO" id="GO:0003676">
    <property type="term" value="F:nucleic acid binding"/>
    <property type="evidence" value="ECO:0007669"/>
    <property type="project" value="InterPro"/>
</dbReference>
<dbReference type="GO" id="GO:0003724">
    <property type="term" value="F:RNA helicase activity"/>
    <property type="evidence" value="ECO:0007669"/>
    <property type="project" value="UniProtKB-EC"/>
</dbReference>
<dbReference type="GO" id="GO:0006397">
    <property type="term" value="P:mRNA processing"/>
    <property type="evidence" value="ECO:0007669"/>
    <property type="project" value="UniProtKB-KW"/>
</dbReference>
<dbReference type="GO" id="GO:0008380">
    <property type="term" value="P:RNA splicing"/>
    <property type="evidence" value="ECO:0007669"/>
    <property type="project" value="UniProtKB-KW"/>
</dbReference>
<dbReference type="CDD" id="cd17945">
    <property type="entry name" value="DEADc_DDX23"/>
    <property type="match status" value="1"/>
</dbReference>
<dbReference type="CDD" id="cd18787">
    <property type="entry name" value="SF2_C_DEAD"/>
    <property type="match status" value="1"/>
</dbReference>
<dbReference type="FunFam" id="3.40.50.300:FF:000322">
    <property type="entry name" value="probable ATP-dependent RNA helicase DDX23"/>
    <property type="match status" value="1"/>
</dbReference>
<dbReference type="Gene3D" id="3.40.50.300">
    <property type="entry name" value="P-loop containing nucleotide triphosphate hydrolases"/>
    <property type="match status" value="2"/>
</dbReference>
<dbReference type="InterPro" id="IPR011545">
    <property type="entry name" value="DEAD/DEAH_box_helicase_dom"/>
</dbReference>
<dbReference type="InterPro" id="IPR014001">
    <property type="entry name" value="Helicase_ATP-bd"/>
</dbReference>
<dbReference type="InterPro" id="IPR001650">
    <property type="entry name" value="Helicase_C-like"/>
</dbReference>
<dbReference type="InterPro" id="IPR027417">
    <property type="entry name" value="P-loop_NTPase"/>
</dbReference>
<dbReference type="InterPro" id="IPR000629">
    <property type="entry name" value="RNA-helicase_DEAD-box_CS"/>
</dbReference>
<dbReference type="InterPro" id="IPR014014">
    <property type="entry name" value="RNA_helicase_DEAD_Q_motif"/>
</dbReference>
<dbReference type="PANTHER" id="PTHR47958">
    <property type="entry name" value="ATP-DEPENDENT RNA HELICASE DBP3"/>
    <property type="match status" value="1"/>
</dbReference>
<dbReference type="Pfam" id="PF25430">
    <property type="entry name" value="DDX23"/>
    <property type="match status" value="1"/>
</dbReference>
<dbReference type="Pfam" id="PF00270">
    <property type="entry name" value="DEAD"/>
    <property type="match status" value="1"/>
</dbReference>
<dbReference type="Pfam" id="PF00271">
    <property type="entry name" value="Helicase_C"/>
    <property type="match status" value="1"/>
</dbReference>
<dbReference type="SMART" id="SM00487">
    <property type="entry name" value="DEXDc"/>
    <property type="match status" value="1"/>
</dbReference>
<dbReference type="SMART" id="SM00490">
    <property type="entry name" value="HELICc"/>
    <property type="match status" value="1"/>
</dbReference>
<dbReference type="SUPFAM" id="SSF52540">
    <property type="entry name" value="P-loop containing nucleoside triphosphate hydrolases"/>
    <property type="match status" value="1"/>
</dbReference>
<dbReference type="PROSITE" id="PS00039">
    <property type="entry name" value="DEAD_ATP_HELICASE"/>
    <property type="match status" value="1"/>
</dbReference>
<dbReference type="PROSITE" id="PS51192">
    <property type="entry name" value="HELICASE_ATP_BIND_1"/>
    <property type="match status" value="1"/>
</dbReference>
<dbReference type="PROSITE" id="PS51194">
    <property type="entry name" value="HELICASE_CTER"/>
    <property type="match status" value="1"/>
</dbReference>
<dbReference type="PROSITE" id="PS51195">
    <property type="entry name" value="Q_MOTIF"/>
    <property type="match status" value="1"/>
</dbReference>
<feature type="chain" id="PRO_0000282480" description="Pre-mRNA-splicing ATP-dependent RNA helicase prp28">
    <location>
        <begin position="1"/>
        <end position="783"/>
    </location>
</feature>
<feature type="domain" description="Helicase ATP-binding" evidence="2">
    <location>
        <begin position="374"/>
        <end position="583"/>
    </location>
</feature>
<feature type="domain" description="Helicase C-terminal" evidence="3">
    <location>
        <begin position="594"/>
        <end position="757"/>
    </location>
</feature>
<feature type="region of interest" description="Disordered" evidence="4">
    <location>
        <begin position="1"/>
        <end position="193"/>
    </location>
</feature>
<feature type="region of interest" description="Disordered" evidence="4">
    <location>
        <begin position="752"/>
        <end position="783"/>
    </location>
</feature>
<feature type="short sequence motif" description="Q motif">
    <location>
        <begin position="343"/>
        <end position="371"/>
    </location>
</feature>
<feature type="short sequence motif" description="DEAD box">
    <location>
        <begin position="502"/>
        <end position="505"/>
    </location>
</feature>
<feature type="compositionally biased region" description="Pro residues" evidence="4">
    <location>
        <begin position="1"/>
        <end position="52"/>
    </location>
</feature>
<feature type="compositionally biased region" description="Basic and acidic residues" evidence="4">
    <location>
        <begin position="75"/>
        <end position="84"/>
    </location>
</feature>
<feature type="compositionally biased region" description="Basic and acidic residues" evidence="4">
    <location>
        <begin position="94"/>
        <end position="114"/>
    </location>
</feature>
<feature type="compositionally biased region" description="Polar residues" evidence="4">
    <location>
        <begin position="118"/>
        <end position="135"/>
    </location>
</feature>
<feature type="compositionally biased region" description="Low complexity" evidence="4">
    <location>
        <begin position="167"/>
        <end position="182"/>
    </location>
</feature>
<feature type="binding site" evidence="2">
    <location>
        <begin position="387"/>
        <end position="394"/>
    </location>
    <ligand>
        <name>ATP</name>
        <dbReference type="ChEBI" id="CHEBI:30616"/>
    </ligand>
</feature>
<comment type="function">
    <text evidence="1">ATP-dependent RNA helicase involved in mRNA splicing. May destabilize the U1/5'-splice site duplex to permit an effective competition for the 5'-splice site by the U6 snRNA, resulting in the switch between U1 and U6 at the 5'-splice site. May also act to unwind the U4/U6 base-pairing interaction in the U4/U6/U5 snRNP, facilitating the first covalent step of splicing (By similarity).</text>
</comment>
<comment type="catalytic activity">
    <reaction>
        <text>ATP + H2O = ADP + phosphate + H(+)</text>
        <dbReference type="Rhea" id="RHEA:13065"/>
        <dbReference type="ChEBI" id="CHEBI:15377"/>
        <dbReference type="ChEBI" id="CHEBI:15378"/>
        <dbReference type="ChEBI" id="CHEBI:30616"/>
        <dbReference type="ChEBI" id="CHEBI:43474"/>
        <dbReference type="ChEBI" id="CHEBI:456216"/>
        <dbReference type="EC" id="3.6.4.13"/>
    </reaction>
</comment>
<comment type="subunit">
    <text evidence="1">Component of the U5 snRNP complex.</text>
</comment>
<comment type="subcellular location">
    <subcellularLocation>
        <location evidence="1">Cytoplasm</location>
    </subcellularLocation>
    <subcellularLocation>
        <location evidence="1">Nucleus</location>
    </subcellularLocation>
</comment>
<comment type="domain">
    <text>The Q motif is unique to and characteristic of the DEAD box family of RNA helicases and controls ATP binding and hydrolysis.</text>
</comment>
<comment type="similarity">
    <text evidence="5">Belongs to the DEAD box helicase family. DDX23/PRP28 subfamily.</text>
</comment>
<reference key="1">
    <citation type="submission" date="2005-09" db="EMBL/GenBank/DDBJ databases">
        <title>Annotation of the Aspergillus terreus NIH2624 genome.</title>
        <authorList>
            <person name="Birren B.W."/>
            <person name="Lander E.S."/>
            <person name="Galagan J.E."/>
            <person name="Nusbaum C."/>
            <person name="Devon K."/>
            <person name="Henn M."/>
            <person name="Ma L.-J."/>
            <person name="Jaffe D.B."/>
            <person name="Butler J."/>
            <person name="Alvarez P."/>
            <person name="Gnerre S."/>
            <person name="Grabherr M."/>
            <person name="Kleber M."/>
            <person name="Mauceli E.W."/>
            <person name="Brockman W."/>
            <person name="Rounsley S."/>
            <person name="Young S.K."/>
            <person name="LaButti K."/>
            <person name="Pushparaj V."/>
            <person name="DeCaprio D."/>
            <person name="Crawford M."/>
            <person name="Koehrsen M."/>
            <person name="Engels R."/>
            <person name="Montgomery P."/>
            <person name="Pearson M."/>
            <person name="Howarth C."/>
            <person name="Larson L."/>
            <person name="Luoma S."/>
            <person name="White J."/>
            <person name="Alvarado L."/>
            <person name="Kodira C.D."/>
            <person name="Zeng Q."/>
            <person name="Oleary S."/>
            <person name="Yandava C."/>
            <person name="Denning D.W."/>
            <person name="Nierman W.C."/>
            <person name="Milne T."/>
            <person name="Madden K."/>
        </authorList>
    </citation>
    <scope>NUCLEOTIDE SEQUENCE [LARGE SCALE GENOMIC DNA]</scope>
    <source>
        <strain>NIH 2624 / FGSC A1156</strain>
    </source>
</reference>
<proteinExistence type="inferred from homology"/>
<gene>
    <name type="primary">prp28</name>
    <name type="ORF">ATEG_05314</name>
</gene>
<accession>Q0CLX0</accession>
<organism>
    <name type="scientific">Aspergillus terreus (strain NIH 2624 / FGSC A1156)</name>
    <dbReference type="NCBI Taxonomy" id="341663"/>
    <lineage>
        <taxon>Eukaryota</taxon>
        <taxon>Fungi</taxon>
        <taxon>Dikarya</taxon>
        <taxon>Ascomycota</taxon>
        <taxon>Pezizomycotina</taxon>
        <taxon>Eurotiomycetes</taxon>
        <taxon>Eurotiomycetidae</taxon>
        <taxon>Eurotiales</taxon>
        <taxon>Aspergillaceae</taxon>
        <taxon>Aspergillus</taxon>
        <taxon>Aspergillus subgen. Circumdati</taxon>
    </lineage>
</organism>